<sequence length="219" mass="23675">MSHYRQRFLQLALDSNALCFGEFTLKSGRISPYFFNAGHFNSGAKTAALAQCYADAIDAANMNFDLVFGPAYKGIPLATALACEYARRERDLLLAFNRKEVKNHGEGGTLIGAPLNGRKILIIDDVITAGTAIREVLRIIRNAGGTPTGIAVALNRQEIASETNRQSSVQALMAETGIPVVAIATLSDLLAFVEENASLAKFYEPLLAYKTHYGTEASD</sequence>
<proteinExistence type="inferred from homology"/>
<keyword id="KW-0328">Glycosyltransferase</keyword>
<keyword id="KW-0460">Magnesium</keyword>
<keyword id="KW-0665">Pyrimidine biosynthesis</keyword>
<keyword id="KW-0808">Transferase</keyword>
<evidence type="ECO:0000255" key="1">
    <source>
        <dbReference type="HAMAP-Rule" id="MF_01208"/>
    </source>
</evidence>
<dbReference type="EC" id="2.4.2.10" evidence="1"/>
<dbReference type="EMBL" id="AE003849">
    <property type="protein sequence ID" value="AAF82966.1"/>
    <property type="molecule type" value="Genomic_DNA"/>
</dbReference>
<dbReference type="PIR" id="H82840">
    <property type="entry name" value="H82840"/>
</dbReference>
<dbReference type="RefSeq" id="WP_010892698.1">
    <property type="nucleotide sequence ID" value="NC_002488.3"/>
</dbReference>
<dbReference type="SMR" id="Q9PGZ3"/>
<dbReference type="STRING" id="160492.XF_0153"/>
<dbReference type="KEGG" id="xfa:XF_0153"/>
<dbReference type="eggNOG" id="COG0461">
    <property type="taxonomic scope" value="Bacteria"/>
</dbReference>
<dbReference type="HOGENOM" id="CLU_074878_0_1_6"/>
<dbReference type="UniPathway" id="UPA00070">
    <property type="reaction ID" value="UER00119"/>
</dbReference>
<dbReference type="Proteomes" id="UP000000812">
    <property type="component" value="Chromosome"/>
</dbReference>
<dbReference type="GO" id="GO:0005737">
    <property type="term" value="C:cytoplasm"/>
    <property type="evidence" value="ECO:0007669"/>
    <property type="project" value="TreeGrafter"/>
</dbReference>
<dbReference type="GO" id="GO:0000287">
    <property type="term" value="F:magnesium ion binding"/>
    <property type="evidence" value="ECO:0007669"/>
    <property type="project" value="UniProtKB-UniRule"/>
</dbReference>
<dbReference type="GO" id="GO:0004588">
    <property type="term" value="F:orotate phosphoribosyltransferase activity"/>
    <property type="evidence" value="ECO:0007669"/>
    <property type="project" value="UniProtKB-UniRule"/>
</dbReference>
<dbReference type="GO" id="GO:0006207">
    <property type="term" value="P:'de novo' pyrimidine nucleobase biosynthetic process"/>
    <property type="evidence" value="ECO:0007669"/>
    <property type="project" value="TreeGrafter"/>
</dbReference>
<dbReference type="GO" id="GO:0044205">
    <property type="term" value="P:'de novo' UMP biosynthetic process"/>
    <property type="evidence" value="ECO:0007669"/>
    <property type="project" value="UniProtKB-UniRule"/>
</dbReference>
<dbReference type="GO" id="GO:0046132">
    <property type="term" value="P:pyrimidine ribonucleoside biosynthetic process"/>
    <property type="evidence" value="ECO:0007669"/>
    <property type="project" value="TreeGrafter"/>
</dbReference>
<dbReference type="CDD" id="cd06223">
    <property type="entry name" value="PRTases_typeI"/>
    <property type="match status" value="1"/>
</dbReference>
<dbReference type="FunFam" id="3.40.50.2020:FF:000052">
    <property type="entry name" value="Orotate phosphoribosyltransferase"/>
    <property type="match status" value="1"/>
</dbReference>
<dbReference type="Gene3D" id="3.40.50.2020">
    <property type="match status" value="1"/>
</dbReference>
<dbReference type="HAMAP" id="MF_01208">
    <property type="entry name" value="PyrE"/>
    <property type="match status" value="1"/>
</dbReference>
<dbReference type="InterPro" id="IPR023031">
    <property type="entry name" value="OPRT"/>
</dbReference>
<dbReference type="InterPro" id="IPR004467">
    <property type="entry name" value="Or_phspho_trans_dom"/>
</dbReference>
<dbReference type="InterPro" id="IPR000836">
    <property type="entry name" value="PRibTrfase_dom"/>
</dbReference>
<dbReference type="InterPro" id="IPR029057">
    <property type="entry name" value="PRTase-like"/>
</dbReference>
<dbReference type="NCBIfam" id="TIGR00336">
    <property type="entry name" value="pyrE"/>
    <property type="match status" value="1"/>
</dbReference>
<dbReference type="PANTHER" id="PTHR46683">
    <property type="entry name" value="OROTATE PHOSPHORIBOSYLTRANSFERASE 1-RELATED"/>
    <property type="match status" value="1"/>
</dbReference>
<dbReference type="PANTHER" id="PTHR46683:SF1">
    <property type="entry name" value="OROTATE PHOSPHORIBOSYLTRANSFERASE 1-RELATED"/>
    <property type="match status" value="1"/>
</dbReference>
<dbReference type="Pfam" id="PF00156">
    <property type="entry name" value="Pribosyltran"/>
    <property type="match status" value="1"/>
</dbReference>
<dbReference type="SUPFAM" id="SSF53271">
    <property type="entry name" value="PRTase-like"/>
    <property type="match status" value="1"/>
</dbReference>
<dbReference type="PROSITE" id="PS00103">
    <property type="entry name" value="PUR_PYR_PR_TRANSFER"/>
    <property type="match status" value="1"/>
</dbReference>
<accession>Q9PGZ3</accession>
<organism>
    <name type="scientific">Xylella fastidiosa (strain 9a5c)</name>
    <dbReference type="NCBI Taxonomy" id="160492"/>
    <lineage>
        <taxon>Bacteria</taxon>
        <taxon>Pseudomonadati</taxon>
        <taxon>Pseudomonadota</taxon>
        <taxon>Gammaproteobacteria</taxon>
        <taxon>Lysobacterales</taxon>
        <taxon>Lysobacteraceae</taxon>
        <taxon>Xylella</taxon>
    </lineage>
</organism>
<protein>
    <recommendedName>
        <fullName evidence="1">Orotate phosphoribosyltransferase</fullName>
        <shortName evidence="1">OPRT</shortName>
        <shortName evidence="1">OPRTase</shortName>
        <ecNumber evidence="1">2.4.2.10</ecNumber>
    </recommendedName>
</protein>
<name>PYRE_XYLFA</name>
<reference key="1">
    <citation type="journal article" date="2000" name="Nature">
        <title>The genome sequence of the plant pathogen Xylella fastidiosa.</title>
        <authorList>
            <person name="Simpson A.J.G."/>
            <person name="Reinach F.C."/>
            <person name="Arruda P."/>
            <person name="Abreu F.A."/>
            <person name="Acencio M."/>
            <person name="Alvarenga R."/>
            <person name="Alves L.M.C."/>
            <person name="Araya J.E."/>
            <person name="Baia G.S."/>
            <person name="Baptista C.S."/>
            <person name="Barros M.H."/>
            <person name="Bonaccorsi E.D."/>
            <person name="Bordin S."/>
            <person name="Bove J.M."/>
            <person name="Briones M.R.S."/>
            <person name="Bueno M.R.P."/>
            <person name="Camargo A.A."/>
            <person name="Camargo L.E.A."/>
            <person name="Carraro D.M."/>
            <person name="Carrer H."/>
            <person name="Colauto N.B."/>
            <person name="Colombo C."/>
            <person name="Costa F.F."/>
            <person name="Costa M.C.R."/>
            <person name="Costa-Neto C.M."/>
            <person name="Coutinho L.L."/>
            <person name="Cristofani M."/>
            <person name="Dias-Neto E."/>
            <person name="Docena C."/>
            <person name="El-Dorry H."/>
            <person name="Facincani A.P."/>
            <person name="Ferreira A.J.S."/>
            <person name="Ferreira V.C.A."/>
            <person name="Ferro J.A."/>
            <person name="Fraga J.S."/>
            <person name="Franca S.C."/>
            <person name="Franco M.C."/>
            <person name="Frohme M."/>
            <person name="Furlan L.R."/>
            <person name="Garnier M."/>
            <person name="Goldman G.H."/>
            <person name="Goldman M.H.S."/>
            <person name="Gomes S.L."/>
            <person name="Gruber A."/>
            <person name="Ho P.L."/>
            <person name="Hoheisel J.D."/>
            <person name="Junqueira M.L."/>
            <person name="Kemper E.L."/>
            <person name="Kitajima J.P."/>
            <person name="Krieger J.E."/>
            <person name="Kuramae E.E."/>
            <person name="Laigret F."/>
            <person name="Lambais M.R."/>
            <person name="Leite L.C.C."/>
            <person name="Lemos E.G.M."/>
            <person name="Lemos M.V.F."/>
            <person name="Lopes S.A."/>
            <person name="Lopes C.R."/>
            <person name="Machado J.A."/>
            <person name="Machado M.A."/>
            <person name="Madeira A.M.B.N."/>
            <person name="Madeira H.M.F."/>
            <person name="Marino C.L."/>
            <person name="Marques M.V."/>
            <person name="Martins E.A.L."/>
            <person name="Martins E.M.F."/>
            <person name="Matsukuma A.Y."/>
            <person name="Menck C.F.M."/>
            <person name="Miracca E.C."/>
            <person name="Miyaki C.Y."/>
            <person name="Monteiro-Vitorello C.B."/>
            <person name="Moon D.H."/>
            <person name="Nagai M.A."/>
            <person name="Nascimento A.L.T.O."/>
            <person name="Netto L.E.S."/>
            <person name="Nhani A. Jr."/>
            <person name="Nobrega F.G."/>
            <person name="Nunes L.R."/>
            <person name="Oliveira M.A."/>
            <person name="de Oliveira M.C."/>
            <person name="de Oliveira R.C."/>
            <person name="Palmieri D.A."/>
            <person name="Paris A."/>
            <person name="Peixoto B.R."/>
            <person name="Pereira G.A.G."/>
            <person name="Pereira H.A. Jr."/>
            <person name="Pesquero J.B."/>
            <person name="Quaggio R.B."/>
            <person name="Roberto P.G."/>
            <person name="Rodrigues V."/>
            <person name="de Rosa A.J.M."/>
            <person name="de Rosa V.E. Jr."/>
            <person name="de Sa R.G."/>
            <person name="Santelli R.V."/>
            <person name="Sawasaki H.E."/>
            <person name="da Silva A.C.R."/>
            <person name="da Silva A.M."/>
            <person name="da Silva F.R."/>
            <person name="Silva W.A. Jr."/>
            <person name="da Silveira J.F."/>
            <person name="Silvestri M.L.Z."/>
            <person name="Siqueira W.J."/>
            <person name="de Souza A.A."/>
            <person name="de Souza A.P."/>
            <person name="Terenzi M.F."/>
            <person name="Truffi D."/>
            <person name="Tsai S.M."/>
            <person name="Tsuhako M.H."/>
            <person name="Vallada H."/>
            <person name="Van Sluys M.A."/>
            <person name="Verjovski-Almeida S."/>
            <person name="Vettore A.L."/>
            <person name="Zago M.A."/>
            <person name="Zatz M."/>
            <person name="Meidanis J."/>
            <person name="Setubal J.C."/>
        </authorList>
    </citation>
    <scope>NUCLEOTIDE SEQUENCE [LARGE SCALE GENOMIC DNA]</scope>
    <source>
        <strain>9a5c</strain>
    </source>
</reference>
<comment type="function">
    <text evidence="1">Catalyzes the transfer of a ribosyl phosphate group from 5-phosphoribose 1-diphosphate to orotate, leading to the formation of orotidine monophosphate (OMP).</text>
</comment>
<comment type="catalytic activity">
    <reaction evidence="1">
        <text>orotidine 5'-phosphate + diphosphate = orotate + 5-phospho-alpha-D-ribose 1-diphosphate</text>
        <dbReference type="Rhea" id="RHEA:10380"/>
        <dbReference type="ChEBI" id="CHEBI:30839"/>
        <dbReference type="ChEBI" id="CHEBI:33019"/>
        <dbReference type="ChEBI" id="CHEBI:57538"/>
        <dbReference type="ChEBI" id="CHEBI:58017"/>
        <dbReference type="EC" id="2.4.2.10"/>
    </reaction>
</comment>
<comment type="cofactor">
    <cofactor evidence="1">
        <name>Mg(2+)</name>
        <dbReference type="ChEBI" id="CHEBI:18420"/>
    </cofactor>
</comment>
<comment type="pathway">
    <text evidence="1">Pyrimidine metabolism; UMP biosynthesis via de novo pathway; UMP from orotate: step 1/2.</text>
</comment>
<comment type="subunit">
    <text evidence="1">Homodimer.</text>
</comment>
<comment type="similarity">
    <text evidence="1">Belongs to the purine/pyrimidine phosphoribosyltransferase family. PyrE subfamily.</text>
</comment>
<feature type="chain" id="PRO_0000110772" description="Orotate phosphoribosyltransferase">
    <location>
        <begin position="1"/>
        <end position="219"/>
    </location>
</feature>
<feature type="binding site" description="in other chain" evidence="1">
    <location>
        <position position="26"/>
    </location>
    <ligand>
        <name>5-phospho-alpha-D-ribose 1-diphosphate</name>
        <dbReference type="ChEBI" id="CHEBI:58017"/>
        <note>ligand shared between dimeric partners</note>
    </ligand>
</feature>
<feature type="binding site" evidence="1">
    <location>
        <begin position="34"/>
        <end position="35"/>
    </location>
    <ligand>
        <name>orotate</name>
        <dbReference type="ChEBI" id="CHEBI:30839"/>
    </ligand>
</feature>
<feature type="binding site" description="in other chain" evidence="1">
    <location>
        <begin position="72"/>
        <end position="73"/>
    </location>
    <ligand>
        <name>5-phospho-alpha-D-ribose 1-diphosphate</name>
        <dbReference type="ChEBI" id="CHEBI:58017"/>
        <note>ligand shared between dimeric partners</note>
    </ligand>
</feature>
<feature type="binding site" evidence="1">
    <location>
        <position position="98"/>
    </location>
    <ligand>
        <name>5-phospho-alpha-D-ribose 1-diphosphate</name>
        <dbReference type="ChEBI" id="CHEBI:58017"/>
        <note>ligand shared between dimeric partners</note>
    </ligand>
</feature>
<feature type="binding site" description="in other chain" evidence="1">
    <location>
        <position position="99"/>
    </location>
    <ligand>
        <name>5-phospho-alpha-D-ribose 1-diphosphate</name>
        <dbReference type="ChEBI" id="CHEBI:58017"/>
        <note>ligand shared between dimeric partners</note>
    </ligand>
</feature>
<feature type="binding site" evidence="1">
    <location>
        <position position="102"/>
    </location>
    <ligand>
        <name>5-phospho-alpha-D-ribose 1-diphosphate</name>
        <dbReference type="ChEBI" id="CHEBI:58017"/>
        <note>ligand shared between dimeric partners</note>
    </ligand>
</feature>
<feature type="binding site" evidence="1">
    <location>
        <position position="104"/>
    </location>
    <ligand>
        <name>5-phospho-alpha-D-ribose 1-diphosphate</name>
        <dbReference type="ChEBI" id="CHEBI:58017"/>
        <note>ligand shared between dimeric partners</note>
    </ligand>
</feature>
<feature type="binding site" description="in other chain" evidence="1">
    <location>
        <begin position="124"/>
        <end position="132"/>
    </location>
    <ligand>
        <name>5-phospho-alpha-D-ribose 1-diphosphate</name>
        <dbReference type="ChEBI" id="CHEBI:58017"/>
        <note>ligand shared between dimeric partners</note>
    </ligand>
</feature>
<feature type="binding site" evidence="1">
    <location>
        <position position="128"/>
    </location>
    <ligand>
        <name>orotate</name>
        <dbReference type="ChEBI" id="CHEBI:30839"/>
    </ligand>
</feature>
<feature type="binding site" evidence="1">
    <location>
        <position position="156"/>
    </location>
    <ligand>
        <name>orotate</name>
        <dbReference type="ChEBI" id="CHEBI:30839"/>
    </ligand>
</feature>
<gene>
    <name evidence="1" type="primary">pyrE</name>
    <name type="ordered locus">XF_0153</name>
</gene>